<accession>P55509</accession>
<name>Y4JI_SINFN</name>
<reference key="1">
    <citation type="journal article" date="1997" name="Nature">
        <title>Molecular basis of symbiosis between Rhizobium and legumes.</title>
        <authorList>
            <person name="Freiberg C.A."/>
            <person name="Fellay R."/>
            <person name="Bairoch A."/>
            <person name="Broughton W.J."/>
            <person name="Rosenthal A."/>
            <person name="Perret X."/>
        </authorList>
    </citation>
    <scope>NUCLEOTIDE SEQUENCE [LARGE SCALE GENOMIC DNA]</scope>
    <source>
        <strain>NBRC 101917 / NGR234</strain>
    </source>
</reference>
<reference key="2">
    <citation type="journal article" date="2009" name="Appl. Environ. Microbiol.">
        <title>Rhizobium sp. strain NGR234 possesses a remarkable number of secretion systems.</title>
        <authorList>
            <person name="Schmeisser C."/>
            <person name="Liesegang H."/>
            <person name="Krysciak D."/>
            <person name="Bakkou N."/>
            <person name="Le Quere A."/>
            <person name="Wollherr A."/>
            <person name="Heinemeyer I."/>
            <person name="Morgenstern B."/>
            <person name="Pommerening-Roeser A."/>
            <person name="Flores M."/>
            <person name="Palacios R."/>
            <person name="Brenner S."/>
            <person name="Gottschalk G."/>
            <person name="Schmitz R.A."/>
            <person name="Broughton W.J."/>
            <person name="Perret X."/>
            <person name="Strittmatter A.W."/>
            <person name="Streit W.R."/>
        </authorList>
    </citation>
    <scope>NUCLEOTIDE SEQUENCE [LARGE SCALE GENOMIC DNA]</scope>
    <source>
        <strain>NBRC 101917 / NGR234</strain>
    </source>
</reference>
<sequence length="130" mass="13606">MAPSGRSKTASPLTGRSAVVPWGRLASHWSMTMSKEAGKGDNHGGGPGKIEIIVVVNGQPTQVEANPNQPLHVVRTKALENTQNVAQPAENWEFKDEAGTLLDADKKIGDFGFANTGTLFLSLKAGVAGA</sequence>
<gene>
    <name type="ordered locus">NGR_a03060</name>
    <name type="ORF">y4jI</name>
</gene>
<protein>
    <recommendedName>
        <fullName>Uncharacterized protein y4jI</fullName>
    </recommendedName>
</protein>
<organism>
    <name type="scientific">Sinorhizobium fredii (strain NBRC 101917 / NGR234)</name>
    <dbReference type="NCBI Taxonomy" id="394"/>
    <lineage>
        <taxon>Bacteria</taxon>
        <taxon>Pseudomonadati</taxon>
        <taxon>Pseudomonadota</taxon>
        <taxon>Alphaproteobacteria</taxon>
        <taxon>Hyphomicrobiales</taxon>
        <taxon>Rhizobiaceae</taxon>
        <taxon>Sinorhizobium/Ensifer group</taxon>
        <taxon>Sinorhizobium</taxon>
    </lineage>
</organism>
<feature type="chain" id="PRO_0000200875" description="Uncharacterized protein y4jI">
    <location>
        <begin position="1"/>
        <end position="130"/>
    </location>
</feature>
<proteinExistence type="predicted"/>
<geneLocation type="plasmid">
    <name>sym pNGR234a</name>
</geneLocation>
<dbReference type="EMBL" id="U00090">
    <property type="protein sequence ID" value="AAB91721.1"/>
    <property type="molecule type" value="Genomic_DNA"/>
</dbReference>
<dbReference type="RefSeq" id="NP_443919.1">
    <property type="nucleotide sequence ID" value="NC_000914.2"/>
</dbReference>
<dbReference type="SMR" id="P55509"/>
<dbReference type="KEGG" id="rhi:NGR_a03060"/>
<dbReference type="PATRIC" id="fig|394.7.peg.318"/>
<dbReference type="eggNOG" id="ENOG503319T">
    <property type="taxonomic scope" value="Bacteria"/>
</dbReference>
<dbReference type="HOGENOM" id="CLU_131517_0_0_5"/>
<dbReference type="OrthoDB" id="9807990at2"/>
<dbReference type="Proteomes" id="UP000001054">
    <property type="component" value="Plasmid pNGR234a"/>
</dbReference>
<dbReference type="InterPro" id="IPR019726">
    <property type="entry name" value="DUF2604"/>
</dbReference>
<dbReference type="Pfam" id="PF10790">
    <property type="entry name" value="DUF2604"/>
    <property type="match status" value="1"/>
</dbReference>
<keyword id="KW-0614">Plasmid</keyword>
<keyword id="KW-1185">Reference proteome</keyword>